<dbReference type="EC" id="3.1.21.10" evidence="1"/>
<dbReference type="EMBL" id="CP000746">
    <property type="protein sequence ID" value="ABR75152.1"/>
    <property type="status" value="ALT_INIT"/>
    <property type="molecule type" value="Genomic_DNA"/>
</dbReference>
<dbReference type="RefSeq" id="WP_041834815.1">
    <property type="nucleotide sequence ID" value="NC_009655.1"/>
</dbReference>
<dbReference type="SMR" id="A6VQA5"/>
<dbReference type="STRING" id="339671.Asuc_1801"/>
<dbReference type="KEGG" id="asu:Asuc_1801"/>
<dbReference type="eggNOG" id="COG0817">
    <property type="taxonomic scope" value="Bacteria"/>
</dbReference>
<dbReference type="HOGENOM" id="CLU_091257_2_1_6"/>
<dbReference type="OrthoDB" id="9805499at2"/>
<dbReference type="Proteomes" id="UP000001114">
    <property type="component" value="Chromosome"/>
</dbReference>
<dbReference type="GO" id="GO:0005737">
    <property type="term" value="C:cytoplasm"/>
    <property type="evidence" value="ECO:0007669"/>
    <property type="project" value="UniProtKB-SubCell"/>
</dbReference>
<dbReference type="GO" id="GO:0048476">
    <property type="term" value="C:Holliday junction resolvase complex"/>
    <property type="evidence" value="ECO:0007669"/>
    <property type="project" value="UniProtKB-UniRule"/>
</dbReference>
<dbReference type="GO" id="GO:0008821">
    <property type="term" value="F:crossover junction DNA endonuclease activity"/>
    <property type="evidence" value="ECO:0007669"/>
    <property type="project" value="UniProtKB-UniRule"/>
</dbReference>
<dbReference type="GO" id="GO:0003677">
    <property type="term" value="F:DNA binding"/>
    <property type="evidence" value="ECO:0007669"/>
    <property type="project" value="UniProtKB-KW"/>
</dbReference>
<dbReference type="GO" id="GO:0000287">
    <property type="term" value="F:magnesium ion binding"/>
    <property type="evidence" value="ECO:0007669"/>
    <property type="project" value="UniProtKB-UniRule"/>
</dbReference>
<dbReference type="GO" id="GO:0006310">
    <property type="term" value="P:DNA recombination"/>
    <property type="evidence" value="ECO:0007669"/>
    <property type="project" value="UniProtKB-UniRule"/>
</dbReference>
<dbReference type="GO" id="GO:0006281">
    <property type="term" value="P:DNA repair"/>
    <property type="evidence" value="ECO:0007669"/>
    <property type="project" value="UniProtKB-UniRule"/>
</dbReference>
<dbReference type="CDD" id="cd16962">
    <property type="entry name" value="RuvC"/>
    <property type="match status" value="1"/>
</dbReference>
<dbReference type="FunFam" id="3.30.420.10:FF:000002">
    <property type="entry name" value="Crossover junction endodeoxyribonuclease RuvC"/>
    <property type="match status" value="1"/>
</dbReference>
<dbReference type="Gene3D" id="3.30.420.10">
    <property type="entry name" value="Ribonuclease H-like superfamily/Ribonuclease H"/>
    <property type="match status" value="1"/>
</dbReference>
<dbReference type="HAMAP" id="MF_00034">
    <property type="entry name" value="RuvC"/>
    <property type="match status" value="1"/>
</dbReference>
<dbReference type="InterPro" id="IPR012337">
    <property type="entry name" value="RNaseH-like_sf"/>
</dbReference>
<dbReference type="InterPro" id="IPR036397">
    <property type="entry name" value="RNaseH_sf"/>
</dbReference>
<dbReference type="InterPro" id="IPR020563">
    <property type="entry name" value="X-over_junc_endoDNase_Mg_BS"/>
</dbReference>
<dbReference type="InterPro" id="IPR002176">
    <property type="entry name" value="X-over_junc_endoDNase_RuvC"/>
</dbReference>
<dbReference type="NCBIfam" id="NF000711">
    <property type="entry name" value="PRK00039.2-1"/>
    <property type="match status" value="1"/>
</dbReference>
<dbReference type="NCBIfam" id="TIGR00228">
    <property type="entry name" value="ruvC"/>
    <property type="match status" value="1"/>
</dbReference>
<dbReference type="PANTHER" id="PTHR30194">
    <property type="entry name" value="CROSSOVER JUNCTION ENDODEOXYRIBONUCLEASE RUVC"/>
    <property type="match status" value="1"/>
</dbReference>
<dbReference type="PANTHER" id="PTHR30194:SF3">
    <property type="entry name" value="CROSSOVER JUNCTION ENDODEOXYRIBONUCLEASE RUVC"/>
    <property type="match status" value="1"/>
</dbReference>
<dbReference type="Pfam" id="PF02075">
    <property type="entry name" value="RuvC"/>
    <property type="match status" value="1"/>
</dbReference>
<dbReference type="PRINTS" id="PR00696">
    <property type="entry name" value="RSOLVASERUVC"/>
</dbReference>
<dbReference type="SUPFAM" id="SSF53098">
    <property type="entry name" value="Ribonuclease H-like"/>
    <property type="match status" value="1"/>
</dbReference>
<dbReference type="PROSITE" id="PS01321">
    <property type="entry name" value="RUVC"/>
    <property type="match status" value="1"/>
</dbReference>
<gene>
    <name evidence="1" type="primary">ruvC</name>
    <name type="ordered locus">Asuc_1801</name>
</gene>
<proteinExistence type="inferred from homology"/>
<evidence type="ECO:0000255" key="1">
    <source>
        <dbReference type="HAMAP-Rule" id="MF_00034"/>
    </source>
</evidence>
<evidence type="ECO:0000305" key="2"/>
<name>RUVC_ACTSZ</name>
<comment type="function">
    <text evidence="1">The RuvA-RuvB-RuvC complex processes Holliday junction (HJ) DNA during genetic recombination and DNA repair. Endonuclease that resolves HJ intermediates. Cleaves cruciform DNA by making single-stranded nicks across the HJ at symmetrical positions within the homologous arms, yielding a 5'-phosphate and a 3'-hydroxyl group; requires a central core of homology in the junction. The consensus cleavage sequence is 5'-(A/T)TT(C/G)-3'. Cleavage occurs on the 3'-side of the TT dinucleotide at the point of strand exchange. HJ branch migration catalyzed by RuvA-RuvB allows RuvC to scan DNA until it finds its consensus sequence, where it cleaves and resolves the cruciform DNA.</text>
</comment>
<comment type="catalytic activity">
    <reaction evidence="1">
        <text>Endonucleolytic cleavage at a junction such as a reciprocal single-stranded crossover between two homologous DNA duplexes (Holliday junction).</text>
        <dbReference type="EC" id="3.1.21.10"/>
    </reaction>
</comment>
<comment type="cofactor">
    <cofactor evidence="1">
        <name>Mg(2+)</name>
        <dbReference type="ChEBI" id="CHEBI:18420"/>
    </cofactor>
    <text evidence="1">Binds 2 Mg(2+) ion per subunit.</text>
</comment>
<comment type="subunit">
    <text evidence="1">Homodimer which binds Holliday junction (HJ) DNA. The HJ becomes 2-fold symmetrical on binding to RuvC with unstacked arms; it has a different conformation from HJ DNA in complex with RuvA. In the full resolvosome a probable DNA-RuvA(4)-RuvB(12)-RuvC(2) complex forms which resolves the HJ.</text>
</comment>
<comment type="subcellular location">
    <subcellularLocation>
        <location evidence="1">Cytoplasm</location>
    </subcellularLocation>
</comment>
<comment type="similarity">
    <text evidence="1">Belongs to the RuvC family.</text>
</comment>
<comment type="sequence caution" evidence="2">
    <conflict type="erroneous initiation">
        <sequence resource="EMBL-CDS" id="ABR75152"/>
    </conflict>
    <text>Extended N-terminus.</text>
</comment>
<protein>
    <recommendedName>
        <fullName evidence="1">Crossover junction endodeoxyribonuclease RuvC</fullName>
        <ecNumber evidence="1">3.1.21.10</ecNumber>
    </recommendedName>
    <alternativeName>
        <fullName evidence="1">Holliday junction nuclease RuvC</fullName>
    </alternativeName>
    <alternativeName>
        <fullName evidence="1">Holliday junction resolvase RuvC</fullName>
    </alternativeName>
</protein>
<organism>
    <name type="scientific">Actinobacillus succinogenes (strain ATCC 55618 / DSM 22257 / CCUG 43843 / 130Z)</name>
    <dbReference type="NCBI Taxonomy" id="339671"/>
    <lineage>
        <taxon>Bacteria</taxon>
        <taxon>Pseudomonadati</taxon>
        <taxon>Pseudomonadota</taxon>
        <taxon>Gammaproteobacteria</taxon>
        <taxon>Pasteurellales</taxon>
        <taxon>Pasteurellaceae</taxon>
        <taxon>Actinobacillus</taxon>
    </lineage>
</organism>
<keyword id="KW-0963">Cytoplasm</keyword>
<keyword id="KW-0227">DNA damage</keyword>
<keyword id="KW-0233">DNA recombination</keyword>
<keyword id="KW-0234">DNA repair</keyword>
<keyword id="KW-0238">DNA-binding</keyword>
<keyword id="KW-0255">Endonuclease</keyword>
<keyword id="KW-0378">Hydrolase</keyword>
<keyword id="KW-0460">Magnesium</keyword>
<keyword id="KW-0479">Metal-binding</keyword>
<keyword id="KW-0540">Nuclease</keyword>
<keyword id="KW-1185">Reference proteome</keyword>
<accession>A6VQA5</accession>
<reference key="1">
    <citation type="journal article" date="2010" name="BMC Genomics">
        <title>A genomic perspective on the potential of Actinobacillus succinogenes for industrial succinate production.</title>
        <authorList>
            <person name="McKinlay J.B."/>
            <person name="Laivenieks M."/>
            <person name="Schindler B.D."/>
            <person name="McKinlay A.A."/>
            <person name="Siddaramappa S."/>
            <person name="Challacombe J.F."/>
            <person name="Lowry S.R."/>
            <person name="Clum A."/>
            <person name="Lapidus A.L."/>
            <person name="Burkhart K.B."/>
            <person name="Harkins V."/>
            <person name="Vieille C."/>
        </authorList>
    </citation>
    <scope>NUCLEOTIDE SEQUENCE [LARGE SCALE GENOMIC DNA]</scope>
    <source>
        <strain>ATCC 55618 / DSM 22257 / CCUG 43843 / 130Z</strain>
    </source>
</reference>
<sequence>MTIILGIDPGSRVTGYGVIRQTGRTLEYLGSGVIRTQADDLPTRLKRIYAGVTEIITQFQPDMFAIEEVFLAKNPNSALKLGQARGTAIVAAVNRDLPVFEYAARLVKQTVVGIGSADKSQVQDMVARILKLSDKPQADAADALAIAITHAHTIRHSLHVAASAKTTETQEKLTALMRTRYSRGRFRLKV</sequence>
<feature type="chain" id="PRO_0000332410" description="Crossover junction endodeoxyribonuclease RuvC">
    <location>
        <begin position="1"/>
        <end position="190"/>
    </location>
</feature>
<feature type="active site" evidence="1">
    <location>
        <position position="8"/>
    </location>
</feature>
<feature type="active site" evidence="1">
    <location>
        <position position="67"/>
    </location>
</feature>
<feature type="active site" evidence="1">
    <location>
        <position position="139"/>
    </location>
</feature>
<feature type="binding site" evidence="1">
    <location>
        <position position="8"/>
    </location>
    <ligand>
        <name>Mg(2+)</name>
        <dbReference type="ChEBI" id="CHEBI:18420"/>
        <label>1</label>
    </ligand>
</feature>
<feature type="binding site" evidence="1">
    <location>
        <position position="67"/>
    </location>
    <ligand>
        <name>Mg(2+)</name>
        <dbReference type="ChEBI" id="CHEBI:18420"/>
        <label>2</label>
    </ligand>
</feature>
<feature type="binding site" evidence="1">
    <location>
        <position position="139"/>
    </location>
    <ligand>
        <name>Mg(2+)</name>
        <dbReference type="ChEBI" id="CHEBI:18420"/>
        <label>1</label>
    </ligand>
</feature>